<feature type="chain" id="PRO_1000187238" description="Heme A synthase">
    <location>
        <begin position="1"/>
        <end position="311"/>
    </location>
</feature>
<feature type="topological domain" description="Cytoplasmic" evidence="1">
    <location>
        <begin position="1"/>
        <end position="6"/>
    </location>
</feature>
<feature type="transmembrane region" description="Helical" evidence="1">
    <location>
        <begin position="7"/>
        <end position="27"/>
    </location>
</feature>
<feature type="topological domain" description="Extracellular" evidence="1">
    <location>
        <begin position="28"/>
        <end position="62"/>
    </location>
</feature>
<feature type="transmembrane region" description="Helical" evidence="1">
    <location>
        <begin position="63"/>
        <end position="83"/>
    </location>
</feature>
<feature type="topological domain" description="Cytoplasmic" evidence="1">
    <location>
        <begin position="84"/>
        <end position="91"/>
    </location>
</feature>
<feature type="transmembrane region" description="Helical" evidence="1">
    <location>
        <begin position="92"/>
        <end position="112"/>
    </location>
</feature>
<feature type="topological domain" description="Extracellular" evidence="1">
    <location>
        <begin position="113"/>
        <end position="121"/>
    </location>
</feature>
<feature type="transmembrane region" description="Helical" evidence="1">
    <location>
        <begin position="122"/>
        <end position="142"/>
    </location>
</feature>
<feature type="topological domain" description="Cytoplasmic" evidence="1">
    <location>
        <begin position="143"/>
        <end position="159"/>
    </location>
</feature>
<feature type="transmembrane region" description="Helical" evidence="1">
    <location>
        <begin position="160"/>
        <end position="180"/>
    </location>
</feature>
<feature type="topological domain" description="Extracellular" evidence="1">
    <location>
        <begin position="181"/>
        <end position="211"/>
    </location>
</feature>
<feature type="transmembrane region" description="Helical" evidence="1">
    <location>
        <begin position="212"/>
        <end position="232"/>
    </location>
</feature>
<feature type="topological domain" description="Cytoplasmic" evidence="1">
    <location>
        <begin position="233"/>
        <end position="243"/>
    </location>
</feature>
<feature type="transmembrane region" description="Helical" evidence="1">
    <location>
        <begin position="244"/>
        <end position="264"/>
    </location>
</feature>
<feature type="topological domain" description="Extracellular" evidence="1">
    <location>
        <begin position="265"/>
        <end position="271"/>
    </location>
</feature>
<feature type="transmembrane region" description="Helical" evidence="1">
    <location>
        <begin position="272"/>
        <end position="292"/>
    </location>
</feature>
<feature type="topological domain" description="Cytoplasmic" evidence="1">
    <location>
        <begin position="293"/>
        <end position="311"/>
    </location>
</feature>
<feature type="active site" evidence="1">
    <location>
        <position position="58"/>
    </location>
</feature>
<feature type="binding site" description="axial binding residue" evidence="1">
    <location>
        <position position="61"/>
    </location>
    <ligand>
        <name>heme o</name>
        <dbReference type="ChEBI" id="CHEBI:24480"/>
    </ligand>
    <ligandPart>
        <name>Fe</name>
        <dbReference type="ChEBI" id="CHEBI:18248"/>
    </ligandPart>
</feature>
<feature type="binding site" description="axial binding residue" evidence="1">
    <location>
        <position position="123"/>
    </location>
    <ligand>
        <name>heme o</name>
        <dbReference type="ChEBI" id="CHEBI:24480"/>
    </ligand>
    <ligandPart>
        <name>Fe</name>
        <dbReference type="ChEBI" id="CHEBI:18248"/>
    </ligandPart>
</feature>
<feature type="binding site" description="axial binding residue" evidence="1">
    <location>
        <position position="213"/>
    </location>
    <ligand>
        <name>heme b</name>
        <dbReference type="ChEBI" id="CHEBI:60344"/>
    </ligand>
    <ligandPart>
        <name>Fe</name>
        <dbReference type="ChEBI" id="CHEBI:18248"/>
    </ligandPart>
</feature>
<feature type="binding site" description="axial binding residue" evidence="1">
    <location>
        <position position="275"/>
    </location>
    <ligand>
        <name>heme b</name>
        <dbReference type="ChEBI" id="CHEBI:60344"/>
    </ligand>
    <ligandPart>
        <name>Fe</name>
        <dbReference type="ChEBI" id="CHEBI:18248"/>
    </ligandPart>
</feature>
<feature type="disulfide bond" description="Essential for catalytic activity" evidence="1">
    <location>
        <begin position="35"/>
        <end position="42"/>
    </location>
</feature>
<feature type="disulfide bond" evidence="1">
    <location>
        <begin position="189"/>
        <end position="195"/>
    </location>
</feature>
<protein>
    <recommendedName>
        <fullName evidence="1">Heme A synthase</fullName>
        <shortName evidence="1">HAS</shortName>
        <ecNumber evidence="1">1.17.99.9</ecNumber>
    </recommendedName>
    <alternativeName>
        <fullName evidence="1">Cytochrome aa3-controlling protein</fullName>
    </alternativeName>
</protein>
<keyword id="KW-1003">Cell membrane</keyword>
<keyword id="KW-1015">Disulfide bond</keyword>
<keyword id="KW-0350">Heme biosynthesis</keyword>
<keyword id="KW-0408">Iron</keyword>
<keyword id="KW-0472">Membrane</keyword>
<keyword id="KW-0479">Metal-binding</keyword>
<keyword id="KW-0560">Oxidoreductase</keyword>
<keyword id="KW-0812">Transmembrane</keyword>
<keyword id="KW-1133">Transmembrane helix</keyword>
<organism>
    <name type="scientific">Bacillus cereus (strain 03BB102)</name>
    <dbReference type="NCBI Taxonomy" id="572264"/>
    <lineage>
        <taxon>Bacteria</taxon>
        <taxon>Bacillati</taxon>
        <taxon>Bacillota</taxon>
        <taxon>Bacilli</taxon>
        <taxon>Bacillales</taxon>
        <taxon>Bacillaceae</taxon>
        <taxon>Bacillus</taxon>
        <taxon>Bacillus cereus group</taxon>
    </lineage>
</organism>
<proteinExistence type="inferred from homology"/>
<accession>C1EPW0</accession>
<reference key="1">
    <citation type="submission" date="2009-02" db="EMBL/GenBank/DDBJ databases">
        <title>Genome sequence of Bacillus cereus 03BB102.</title>
        <authorList>
            <person name="Dodson R.J."/>
            <person name="Jackson P."/>
            <person name="Munk A.C."/>
            <person name="Brettin T."/>
            <person name="Bruce D."/>
            <person name="Detter C."/>
            <person name="Tapia R."/>
            <person name="Han C."/>
            <person name="Sutton G."/>
            <person name="Sims D."/>
        </authorList>
    </citation>
    <scope>NUCLEOTIDE SEQUENCE [LARGE SCALE GENOMIC DNA]</scope>
    <source>
        <strain>03BB102</strain>
    </source>
</reference>
<comment type="function">
    <text evidence="1">Catalyzes the conversion of heme O to heme A by two successive hydroxylations of the methyl group at C8. The first hydroxylation forms heme I, the second hydroxylation results in an unstable dihydroxymethyl group, which spontaneously dehydrates, resulting in the formyl group of heme A.</text>
</comment>
<comment type="catalytic activity">
    <reaction evidence="1">
        <text>Fe(II)-heme o + 2 A + H2O = Fe(II)-heme a + 2 AH2</text>
        <dbReference type="Rhea" id="RHEA:63388"/>
        <dbReference type="ChEBI" id="CHEBI:13193"/>
        <dbReference type="ChEBI" id="CHEBI:15377"/>
        <dbReference type="ChEBI" id="CHEBI:17499"/>
        <dbReference type="ChEBI" id="CHEBI:60530"/>
        <dbReference type="ChEBI" id="CHEBI:61715"/>
        <dbReference type="EC" id="1.17.99.9"/>
    </reaction>
    <physiologicalReaction direction="left-to-right" evidence="1">
        <dbReference type="Rhea" id="RHEA:63389"/>
    </physiologicalReaction>
</comment>
<comment type="cofactor">
    <cofactor evidence="1">
        <name>heme b</name>
        <dbReference type="ChEBI" id="CHEBI:60344"/>
    </cofactor>
</comment>
<comment type="pathway">
    <text evidence="1">Porphyrin-containing compound metabolism; heme A biosynthesis; heme A from heme O: step 1/1.</text>
</comment>
<comment type="subunit">
    <text evidence="1">Interacts with CtaB.</text>
</comment>
<comment type="subcellular location">
    <subcellularLocation>
        <location evidence="1">Cell membrane</location>
        <topology evidence="1">Multi-pass membrane protein</topology>
    </subcellularLocation>
</comment>
<comment type="domain">
    <text evidence="1">The N-half (TM1-TM4) and C-half (TM5-TM8) domains are connected by an intracellular loop. Each domain is formed from four-helix bundles and they align in a pseudo twofold symmetry manner. The N-half domain is the substrate-heme O binding domain and the C-half domain is the cofactor heme B binding domain.</text>
</comment>
<comment type="domain">
    <text evidence="1">The cysteines of disulfide bond Cys-35 and Cys-42 may be involved in transfer of reducing equivalents from quinol in the membrane to the active site of the enzyme.</text>
</comment>
<comment type="similarity">
    <text evidence="1">Belongs to the COX15/CtaA family. Type 1 subfamily.</text>
</comment>
<sequence length="311" mass="34625">MQRFIKWLAVITSLDLLIVLLGGALVTKTGSGQGCGKSWPLCNGEFVPSNLSMETIIELSHRLTSGSAGILVTLLCILSWKYYKHVRETKTLAILSFVFLVAQALMGAAAVVWGQMPAVLAIHFGISLISFASVILLTCLIFEIDQKFDARSLIMDKKMKFHIYGVTIYCYLVVYTGALVRHERASLACPDFPLCSKNRPMPTQLHEWVQMGHRLAAMLIFVWILYAMILAIRHYKQQPVVYWGWIISFILVTLQAIVGILVVFTNASLAMALLHSLFISCLFAVLCYLVMLGTRSKVNAKEAASTSKQTK</sequence>
<evidence type="ECO:0000255" key="1">
    <source>
        <dbReference type="HAMAP-Rule" id="MF_01664"/>
    </source>
</evidence>
<gene>
    <name evidence="1" type="primary">ctaA</name>
    <name type="ordered locus">BCA_4051</name>
</gene>
<name>CTAA_BACC3</name>
<dbReference type="EC" id="1.17.99.9" evidence="1"/>
<dbReference type="EMBL" id="CP001407">
    <property type="protein sequence ID" value="ACO26237.1"/>
    <property type="molecule type" value="Genomic_DNA"/>
</dbReference>
<dbReference type="RefSeq" id="WP_001188730.1">
    <property type="nucleotide sequence ID" value="NZ_CP009318.1"/>
</dbReference>
<dbReference type="SMR" id="C1EPW0"/>
<dbReference type="GeneID" id="45023833"/>
<dbReference type="KEGG" id="bcx:BCA_4051"/>
<dbReference type="PATRIC" id="fig|572264.18.peg.4003"/>
<dbReference type="UniPathway" id="UPA00269">
    <property type="reaction ID" value="UER00713"/>
</dbReference>
<dbReference type="Proteomes" id="UP000002210">
    <property type="component" value="Chromosome"/>
</dbReference>
<dbReference type="GO" id="GO:0005886">
    <property type="term" value="C:plasma membrane"/>
    <property type="evidence" value="ECO:0007669"/>
    <property type="project" value="UniProtKB-SubCell"/>
</dbReference>
<dbReference type="GO" id="GO:0046872">
    <property type="term" value="F:metal ion binding"/>
    <property type="evidence" value="ECO:0007669"/>
    <property type="project" value="UniProtKB-KW"/>
</dbReference>
<dbReference type="GO" id="GO:0016653">
    <property type="term" value="F:oxidoreductase activity, acting on NAD(P)H, heme protein as acceptor"/>
    <property type="evidence" value="ECO:0007669"/>
    <property type="project" value="InterPro"/>
</dbReference>
<dbReference type="GO" id="GO:0006784">
    <property type="term" value="P:heme A biosynthetic process"/>
    <property type="evidence" value="ECO:0007669"/>
    <property type="project" value="UniProtKB-UniRule"/>
</dbReference>
<dbReference type="HAMAP" id="MF_01664">
    <property type="entry name" value="HemeA_synth_type1"/>
    <property type="match status" value="1"/>
</dbReference>
<dbReference type="InterPro" id="IPR003780">
    <property type="entry name" value="COX15/CtaA_fam"/>
</dbReference>
<dbReference type="InterPro" id="IPR050450">
    <property type="entry name" value="COX15/CtaA_HemeA_synthase"/>
</dbReference>
<dbReference type="InterPro" id="IPR023755">
    <property type="entry name" value="HemeA_Synthase_type1"/>
</dbReference>
<dbReference type="PANTHER" id="PTHR35457">
    <property type="entry name" value="HEME A SYNTHASE"/>
    <property type="match status" value="1"/>
</dbReference>
<dbReference type="PANTHER" id="PTHR35457:SF1">
    <property type="entry name" value="HEME A SYNTHASE"/>
    <property type="match status" value="1"/>
</dbReference>
<dbReference type="Pfam" id="PF02628">
    <property type="entry name" value="COX15-CtaA"/>
    <property type="match status" value="1"/>
</dbReference>